<reference key="1">
    <citation type="journal article" date="1994" name="J. Biol. Chem.">
        <title>Purification of the NADH:ubiquinone oxidoreductase (complex I) of the respiratory chain from the inner mitochondrial membrane of Solanum tuberosum.</title>
        <authorList>
            <person name="Herz U."/>
            <person name="Schroeder W."/>
            <person name="Liddell A."/>
            <person name="Leaver C.J."/>
            <person name="Brennicke A."/>
            <person name="Grohmann L."/>
        </authorList>
    </citation>
    <scope>PROTEIN SEQUENCE</scope>
    <source>
        <strain>cv. Bintje</strain>
        <tissue>Tuber</tissue>
    </source>
</reference>
<proteinExistence type="evidence at protein level"/>
<organism>
    <name type="scientific">Solanum tuberosum</name>
    <name type="common">Potato</name>
    <dbReference type="NCBI Taxonomy" id="4113"/>
    <lineage>
        <taxon>Eukaryota</taxon>
        <taxon>Viridiplantae</taxon>
        <taxon>Streptophyta</taxon>
        <taxon>Embryophyta</taxon>
        <taxon>Tracheophyta</taxon>
        <taxon>Spermatophyta</taxon>
        <taxon>Magnoliopsida</taxon>
        <taxon>eudicotyledons</taxon>
        <taxon>Gunneridae</taxon>
        <taxon>Pentapetalae</taxon>
        <taxon>asterids</taxon>
        <taxon>lamiids</taxon>
        <taxon>Solanales</taxon>
        <taxon>Solanaceae</taxon>
        <taxon>Solanoideae</taxon>
        <taxon>Solaneae</taxon>
        <taxon>Solanum</taxon>
    </lineage>
</organism>
<accession>P80267</accession>
<protein>
    <recommendedName>
        <fullName>NADH dehydrogenase [ubiquinone] 1 beta subcomplex subunit 10</fullName>
    </recommendedName>
</protein>
<dbReference type="PIR" id="I49732">
    <property type="entry name" value="I49732"/>
</dbReference>
<dbReference type="SMR" id="P80267"/>
<dbReference type="PaxDb" id="4113-PGSC0003DMT400059484"/>
<dbReference type="eggNOG" id="KOG4009">
    <property type="taxonomic scope" value="Eukaryota"/>
</dbReference>
<dbReference type="InParanoid" id="P80267"/>
<dbReference type="Proteomes" id="UP000011115">
    <property type="component" value="Unassembled WGS sequence"/>
</dbReference>
<dbReference type="GO" id="GO:0005743">
    <property type="term" value="C:mitochondrial inner membrane"/>
    <property type="evidence" value="ECO:0007669"/>
    <property type="project" value="UniProtKB-SubCell"/>
</dbReference>
<keyword id="KW-0903">Direct protein sequencing</keyword>
<keyword id="KW-0249">Electron transport</keyword>
<keyword id="KW-0472">Membrane</keyword>
<keyword id="KW-0496">Mitochondrion</keyword>
<keyword id="KW-0999">Mitochondrion inner membrane</keyword>
<keyword id="KW-1185">Reference proteome</keyword>
<keyword id="KW-0679">Respiratory chain</keyword>
<keyword id="KW-0813">Transport</keyword>
<comment type="function">
    <text evidence="1">Accessory subunit of the mitochondrial membrane respiratory chain NADH dehydrogenase (Complex I), that is believed not to be involved in catalysis. Complex I functions in the transfer of electrons from NADH to the respiratory chain. The immediate electron acceptor for the enzyme is believed to be ubiquinone (By similarity).</text>
</comment>
<comment type="subunit">
    <text evidence="1">Complex I is composed of about 45 different subunits.</text>
</comment>
<comment type="subcellular location">
    <subcellularLocation>
        <location>Mitochondrion inner membrane</location>
        <topology>Peripheral membrane protein</topology>
        <orientation>Matrix side</orientation>
    </subcellularLocation>
</comment>
<comment type="similarity">
    <text evidence="3">Belongs to the complex I NDUFB10 subunit family.</text>
</comment>
<name>NDUBA_SOLTU</name>
<feature type="chain" id="PRO_0000118849" description="NADH dehydrogenase [ubiquinone] 1 beta subcomplex subunit 10">
    <location>
        <begin position="1"/>
        <end position="29" status="greater than"/>
    </location>
</feature>
<feature type="region of interest" description="Disordered" evidence="2">
    <location>
        <begin position="1"/>
        <end position="29"/>
    </location>
</feature>
<feature type="non-terminal residue">
    <location>
        <position position="29"/>
    </location>
</feature>
<sequence>GRKKGVQFDEGAPDDFDPNNPYKKDVAFL</sequence>
<evidence type="ECO:0000250" key="1"/>
<evidence type="ECO:0000256" key="2">
    <source>
        <dbReference type="SAM" id="MobiDB-lite"/>
    </source>
</evidence>
<evidence type="ECO:0000305" key="3"/>